<proteinExistence type="inferred from homology"/>
<keyword id="KW-0378">Hydrolase</keyword>
<keyword id="KW-0479">Metal-binding</keyword>
<keyword id="KW-0482">Metalloprotease</keyword>
<keyword id="KW-0574">Periplasm</keyword>
<keyword id="KW-0645">Protease</keyword>
<keyword id="KW-1185">Reference proteome</keyword>
<keyword id="KW-0732">Signal</keyword>
<keyword id="KW-0862">Zinc</keyword>
<reference key="1">
    <citation type="journal article" date="2001" name="Nature">
        <title>Genome sequence of Yersinia pestis, the causative agent of plague.</title>
        <authorList>
            <person name="Parkhill J."/>
            <person name="Wren B.W."/>
            <person name="Thomson N.R."/>
            <person name="Titball R.W."/>
            <person name="Holden M.T.G."/>
            <person name="Prentice M.B."/>
            <person name="Sebaihia M."/>
            <person name="James K.D."/>
            <person name="Churcher C.M."/>
            <person name="Mungall K.L."/>
            <person name="Baker S."/>
            <person name="Basham D."/>
            <person name="Bentley S.D."/>
            <person name="Brooks K."/>
            <person name="Cerdeno-Tarraga A.-M."/>
            <person name="Chillingworth T."/>
            <person name="Cronin A."/>
            <person name="Davies R.M."/>
            <person name="Davis P."/>
            <person name="Dougan G."/>
            <person name="Feltwell T."/>
            <person name="Hamlin N."/>
            <person name="Holroyd S."/>
            <person name="Jagels K."/>
            <person name="Karlyshev A.V."/>
            <person name="Leather S."/>
            <person name="Moule S."/>
            <person name="Oyston P.C.F."/>
            <person name="Quail M.A."/>
            <person name="Rutherford K.M."/>
            <person name="Simmonds M."/>
            <person name="Skelton J."/>
            <person name="Stevens K."/>
            <person name="Whitehead S."/>
            <person name="Barrell B.G."/>
        </authorList>
    </citation>
    <scope>NUCLEOTIDE SEQUENCE [LARGE SCALE GENOMIC DNA]</scope>
    <source>
        <strain>CO-92 / Biovar Orientalis</strain>
    </source>
</reference>
<reference key="2">
    <citation type="journal article" date="2002" name="J. Bacteriol.">
        <title>Genome sequence of Yersinia pestis KIM.</title>
        <authorList>
            <person name="Deng W."/>
            <person name="Burland V."/>
            <person name="Plunkett G. III"/>
            <person name="Boutin A."/>
            <person name="Mayhew G.F."/>
            <person name="Liss P."/>
            <person name="Perna N.T."/>
            <person name="Rose D.J."/>
            <person name="Mau B."/>
            <person name="Zhou S."/>
            <person name="Schwartz D.C."/>
            <person name="Fetherston J.D."/>
            <person name="Lindler L.E."/>
            <person name="Brubaker R.R."/>
            <person name="Plano G.V."/>
            <person name="Straley S.C."/>
            <person name="McDonough K.A."/>
            <person name="Nilles M.L."/>
            <person name="Matson J.S."/>
            <person name="Blattner F.R."/>
            <person name="Perry R.D."/>
        </authorList>
    </citation>
    <scope>NUCLEOTIDE SEQUENCE [LARGE SCALE GENOMIC DNA]</scope>
    <source>
        <strain>KIM10+ / Biovar Mediaevalis</strain>
    </source>
</reference>
<reference key="3">
    <citation type="journal article" date="2004" name="DNA Res.">
        <title>Complete genome sequence of Yersinia pestis strain 91001, an isolate avirulent to humans.</title>
        <authorList>
            <person name="Song Y."/>
            <person name="Tong Z."/>
            <person name="Wang J."/>
            <person name="Wang L."/>
            <person name="Guo Z."/>
            <person name="Han Y."/>
            <person name="Zhang J."/>
            <person name="Pei D."/>
            <person name="Zhou D."/>
            <person name="Qin H."/>
            <person name="Pang X."/>
            <person name="Han Y."/>
            <person name="Zhai J."/>
            <person name="Li M."/>
            <person name="Cui B."/>
            <person name="Qi Z."/>
            <person name="Jin L."/>
            <person name="Dai R."/>
            <person name="Chen F."/>
            <person name="Li S."/>
            <person name="Ye C."/>
            <person name="Du Z."/>
            <person name="Lin W."/>
            <person name="Wang J."/>
            <person name="Yu J."/>
            <person name="Yang H."/>
            <person name="Wang J."/>
            <person name="Huang P."/>
            <person name="Yang R."/>
        </authorList>
    </citation>
    <scope>NUCLEOTIDE SEQUENCE [LARGE SCALE GENOMIC DNA]</scope>
    <source>
        <strain>91001 / Biovar Mediaevalis</strain>
    </source>
</reference>
<sequence>MIATLLSSLLLTGPISAGAETQGLLPAQDLLPDIGTSAGATLSIDQEMAMGDFYVRQMRASAPLIYDPLLTQYINTLGNRLVANANSVRTPFHFYLVNNDQINAFAFFGGNVVLHSALFRYTDNESELASVLAHEISHVTQRHLARAMEEQQRLAPLTWVGVLGSILLTMASPQAGMAGLSGTLAGAQQGIISFTQGNEQEADRIGIQVLQRSGFDPQAMPNFLQKLADQSRYVSKPPEMLLTHPLPDSRLSDARNRANQMKPHPTASSQDYLFAKMRILGMYGADENSLTPELLDKLSKGTVREQLAAKYGQAVQLYQAKKYDEARNLLQPLLAQQPGNIWFLDLMTDIDLGQNKSAAAIARLQNAMVKQNDEPVLQLNLANAYVQGRQPAAAIKLLHRYTFAYPNDPNGWDLLAQATATQGLRDQELAARAESLALSGKLTQAIGLLSDASARVKLGSLEQARYDARIDQLRRLNERFRKYQKS</sequence>
<feature type="signal peptide" evidence="1">
    <location>
        <begin position="1"/>
        <end position="19"/>
    </location>
</feature>
<feature type="chain" id="PRO_0000035702" description="Beta-barrel assembly-enhancing protease">
    <location>
        <begin position="20"/>
        <end position="486"/>
    </location>
</feature>
<feature type="active site" evidence="1">
    <location>
        <position position="135"/>
    </location>
</feature>
<feature type="active site" description="Proton donor" evidence="1">
    <location>
        <position position="203"/>
    </location>
</feature>
<feature type="binding site" evidence="1">
    <location>
        <position position="134"/>
    </location>
    <ligand>
        <name>Zn(2+)</name>
        <dbReference type="ChEBI" id="CHEBI:29105"/>
        <note>catalytic</note>
    </ligand>
</feature>
<feature type="binding site" evidence="1">
    <location>
        <position position="138"/>
    </location>
    <ligand>
        <name>Zn(2+)</name>
        <dbReference type="ChEBI" id="CHEBI:29105"/>
        <note>catalytic</note>
    </ligand>
</feature>
<feature type="binding site" evidence="1">
    <location>
        <position position="199"/>
    </location>
    <ligand>
        <name>Zn(2+)</name>
        <dbReference type="ChEBI" id="CHEBI:29105"/>
        <note>catalytic</note>
    </ligand>
</feature>
<comment type="function">
    <text evidence="1">Functions both as a chaperone and a metalloprotease. Maintains the integrity of the outer membrane by promoting either the assembly or the elimination of outer membrane proteins, depending on their folding state.</text>
</comment>
<comment type="cofactor">
    <cofactor evidence="1">
        <name>Zn(2+)</name>
        <dbReference type="ChEBI" id="CHEBI:29105"/>
    </cofactor>
    <text evidence="1">Binds 1 zinc ion per subunit.</text>
</comment>
<comment type="subcellular location">
    <subcellularLocation>
        <location evidence="1">Periplasm</location>
    </subcellularLocation>
</comment>
<comment type="similarity">
    <text evidence="1">Belongs to the peptidase M48 family. BepA subfamily.</text>
</comment>
<comment type="sequence caution" evidence="2">
    <conflict type="erroneous initiation">
        <sequence resource="EMBL-CDS" id="AAM84984"/>
    </conflict>
    <text>Extended N-terminus.</text>
</comment>
<comment type="sequence caution" evidence="2">
    <conflict type="erroneous initiation">
        <sequence resource="EMBL-CDS" id="AAS62881"/>
    </conflict>
    <text>Extended N-terminus.</text>
</comment>
<evidence type="ECO:0000255" key="1">
    <source>
        <dbReference type="HAMAP-Rule" id="MF_00997"/>
    </source>
</evidence>
<evidence type="ECO:0000305" key="2"/>
<name>BEPA_YERPE</name>
<protein>
    <recommendedName>
        <fullName evidence="1">Beta-barrel assembly-enhancing protease</fullName>
        <ecNumber evidence="1">3.4.-.-</ecNumber>
    </recommendedName>
</protein>
<accession>Q8ZCC3</accession>
<accession>Q0WCJ9</accession>
<organism>
    <name type="scientific">Yersinia pestis</name>
    <dbReference type="NCBI Taxonomy" id="632"/>
    <lineage>
        <taxon>Bacteria</taxon>
        <taxon>Pseudomonadati</taxon>
        <taxon>Pseudomonadota</taxon>
        <taxon>Gammaproteobacteria</taxon>
        <taxon>Enterobacterales</taxon>
        <taxon>Yersiniaceae</taxon>
        <taxon>Yersinia</taxon>
    </lineage>
</organism>
<gene>
    <name evidence="1" type="primary">bepA</name>
    <name type="ordered locus">YPO3069</name>
    <name type="ordered locus">y1412</name>
    <name type="ordered locus">YP_2691</name>
</gene>
<dbReference type="EC" id="3.4.-.-" evidence="1"/>
<dbReference type="EMBL" id="AL590842">
    <property type="protein sequence ID" value="CAL21671.1"/>
    <property type="molecule type" value="Genomic_DNA"/>
</dbReference>
<dbReference type="EMBL" id="AE009952">
    <property type="protein sequence ID" value="AAM84984.1"/>
    <property type="status" value="ALT_INIT"/>
    <property type="molecule type" value="Genomic_DNA"/>
</dbReference>
<dbReference type="EMBL" id="AE017042">
    <property type="protein sequence ID" value="AAS62881.1"/>
    <property type="status" value="ALT_INIT"/>
    <property type="molecule type" value="Genomic_DNA"/>
</dbReference>
<dbReference type="PIR" id="AD0373">
    <property type="entry name" value="AD0373"/>
</dbReference>
<dbReference type="RefSeq" id="YP_002347989.1">
    <property type="nucleotide sequence ID" value="NC_003143.1"/>
</dbReference>
<dbReference type="SMR" id="Q8ZCC3"/>
<dbReference type="IntAct" id="Q8ZCC3">
    <property type="interactions" value="1"/>
</dbReference>
<dbReference type="STRING" id="214092.YPO3069"/>
<dbReference type="MEROPS" id="M48.023"/>
<dbReference type="PaxDb" id="214092-YPO3069"/>
<dbReference type="DNASU" id="1146359"/>
<dbReference type="EnsemblBacteria" id="AAS62881">
    <property type="protein sequence ID" value="AAS62881"/>
    <property type="gene ID" value="YP_2691"/>
</dbReference>
<dbReference type="KEGG" id="ype:YPO3069"/>
<dbReference type="KEGG" id="ypk:y1412"/>
<dbReference type="KEGG" id="ypm:YP_2691"/>
<dbReference type="PATRIC" id="fig|1028802.3.peg.1582"/>
<dbReference type="eggNOG" id="COG4783">
    <property type="taxonomic scope" value="Bacteria"/>
</dbReference>
<dbReference type="HOGENOM" id="CLU_030556_0_1_6"/>
<dbReference type="OMA" id="HLSQRHF"/>
<dbReference type="OrthoDB" id="9810445at2"/>
<dbReference type="Proteomes" id="UP000000815">
    <property type="component" value="Chromosome"/>
</dbReference>
<dbReference type="Proteomes" id="UP000001019">
    <property type="component" value="Chromosome"/>
</dbReference>
<dbReference type="Proteomes" id="UP000002490">
    <property type="component" value="Chromosome"/>
</dbReference>
<dbReference type="GO" id="GO:0016020">
    <property type="term" value="C:membrane"/>
    <property type="evidence" value="ECO:0000318"/>
    <property type="project" value="GO_Central"/>
</dbReference>
<dbReference type="GO" id="GO:0042597">
    <property type="term" value="C:periplasmic space"/>
    <property type="evidence" value="ECO:0007669"/>
    <property type="project" value="UniProtKB-SubCell"/>
</dbReference>
<dbReference type="GO" id="GO:0004222">
    <property type="term" value="F:metalloendopeptidase activity"/>
    <property type="evidence" value="ECO:0000318"/>
    <property type="project" value="GO_Central"/>
</dbReference>
<dbReference type="GO" id="GO:0008270">
    <property type="term" value="F:zinc ion binding"/>
    <property type="evidence" value="ECO:0007669"/>
    <property type="project" value="UniProtKB-UniRule"/>
</dbReference>
<dbReference type="GO" id="GO:0061077">
    <property type="term" value="P:chaperone-mediated protein folding"/>
    <property type="evidence" value="ECO:0007669"/>
    <property type="project" value="InterPro"/>
</dbReference>
<dbReference type="GO" id="GO:0051603">
    <property type="term" value="P:proteolysis involved in protein catabolic process"/>
    <property type="evidence" value="ECO:0000318"/>
    <property type="project" value="GO_Central"/>
</dbReference>
<dbReference type="CDD" id="cd07333">
    <property type="entry name" value="M48C_bepA_like"/>
    <property type="match status" value="1"/>
</dbReference>
<dbReference type="Gene3D" id="3.30.2010.10">
    <property type="entry name" value="Metalloproteases ('zincins'), catalytic domain"/>
    <property type="match status" value="1"/>
</dbReference>
<dbReference type="Gene3D" id="1.25.40.10">
    <property type="entry name" value="Tetratricopeptide repeat domain"/>
    <property type="match status" value="1"/>
</dbReference>
<dbReference type="HAMAP" id="MF_00997">
    <property type="entry name" value="Protease_BepA"/>
    <property type="match status" value="1"/>
</dbReference>
<dbReference type="InterPro" id="IPR051156">
    <property type="entry name" value="Mito/Outer_Membr_Metalloprot"/>
</dbReference>
<dbReference type="InterPro" id="IPR001915">
    <property type="entry name" value="Peptidase_M48"/>
</dbReference>
<dbReference type="InterPro" id="IPR030873">
    <property type="entry name" value="Protease_BepA"/>
</dbReference>
<dbReference type="InterPro" id="IPR011990">
    <property type="entry name" value="TPR-like_helical_dom_sf"/>
</dbReference>
<dbReference type="PANTHER" id="PTHR22726">
    <property type="entry name" value="METALLOENDOPEPTIDASE OMA1"/>
    <property type="match status" value="1"/>
</dbReference>
<dbReference type="PANTHER" id="PTHR22726:SF1">
    <property type="entry name" value="METALLOENDOPEPTIDASE OMA1, MITOCHONDRIAL"/>
    <property type="match status" value="1"/>
</dbReference>
<dbReference type="Pfam" id="PF01435">
    <property type="entry name" value="Peptidase_M48"/>
    <property type="match status" value="1"/>
</dbReference>
<dbReference type="Pfam" id="PF14559">
    <property type="entry name" value="TPR_19"/>
    <property type="match status" value="1"/>
</dbReference>
<dbReference type="SUPFAM" id="SSF48452">
    <property type="entry name" value="TPR-like"/>
    <property type="match status" value="1"/>
</dbReference>